<dbReference type="EMBL" id="BA000050">
    <property type="protein sequence ID" value="BAE58131.1"/>
    <property type="molecule type" value="Genomic_DNA"/>
</dbReference>
<dbReference type="SMR" id="Q2UJY4"/>
<dbReference type="STRING" id="510516.Q2UJY4"/>
<dbReference type="EnsemblFungi" id="BAE58131">
    <property type="protein sequence ID" value="BAE58131"/>
    <property type="gene ID" value="AO090003001024"/>
</dbReference>
<dbReference type="HOGENOM" id="CLU_039097_1_0_1"/>
<dbReference type="Proteomes" id="UP000006564">
    <property type="component" value="Chromosome 2"/>
</dbReference>
<dbReference type="GO" id="GO:0005743">
    <property type="term" value="C:mitochondrial inner membrane"/>
    <property type="evidence" value="ECO:0007669"/>
    <property type="project" value="UniProtKB-SubCell"/>
</dbReference>
<dbReference type="GO" id="GO:0015031">
    <property type="term" value="P:protein transport"/>
    <property type="evidence" value="ECO:0007669"/>
    <property type="project" value="UniProtKB-KW"/>
</dbReference>
<dbReference type="InterPro" id="IPR050187">
    <property type="entry name" value="Lipid_Phosphate_FormReg"/>
</dbReference>
<dbReference type="InterPro" id="IPR021056">
    <property type="entry name" value="Mt_import_IM_translocase_Tim54"/>
</dbReference>
<dbReference type="PANTHER" id="PTHR12358:SF101">
    <property type="entry name" value="MITOCHONDRIAL IMPORT INNER MEMBRANE TRANSLOCASE SUBUNIT TIM54"/>
    <property type="match status" value="1"/>
</dbReference>
<dbReference type="PANTHER" id="PTHR12358">
    <property type="entry name" value="SPHINGOSINE KINASE"/>
    <property type="match status" value="1"/>
</dbReference>
<dbReference type="Pfam" id="PF11711">
    <property type="entry name" value="Tim54"/>
    <property type="match status" value="1"/>
</dbReference>
<keyword id="KW-0472">Membrane</keyword>
<keyword id="KW-0496">Mitochondrion</keyword>
<keyword id="KW-0999">Mitochondrion inner membrane</keyword>
<keyword id="KW-0653">Protein transport</keyword>
<keyword id="KW-1185">Reference proteome</keyword>
<keyword id="KW-0811">Translocation</keyword>
<keyword id="KW-0812">Transmembrane</keyword>
<keyword id="KW-1133">Transmembrane helix</keyword>
<keyword id="KW-0813">Transport</keyword>
<protein>
    <recommendedName>
        <fullName>Mitochondrial import inner membrane translocase subunit tim54</fullName>
    </recommendedName>
</protein>
<evidence type="ECO:0000250" key="1"/>
<evidence type="ECO:0000255" key="2"/>
<evidence type="ECO:0000256" key="3">
    <source>
        <dbReference type="SAM" id="MobiDB-lite"/>
    </source>
</evidence>
<evidence type="ECO:0000305" key="4"/>
<sequence length="445" mass="50011">MPNFRLKLPSRNWMIFLTVTGSFTAALVYDRKQKKRAQQKWCDLVAHLSKESLPVDQTRRKLTVFLSAPPGDGLRVAREHFKEYVKPILVAAALDYQVIEGRREGEIRAGLAERIRKFRRKSGEPSTVVEETGIEEVVADAREKIGVVEEPVPKGDLIIGRNTWKEYIRGLHEGWLGPLDPPQPPLSTDVPSPSEGAETNGSPDDTPTAENSEKKEEPEKKDEKPSKPTGPTPAYITPADYSSQSLPRSLPQSLDGSVPIQFPHILGFLNTPIRIYRYLNQRYLADSVGREVAGIVLASTTRPYSDGSFSTDSELTPAGIDGAPASDNLLGGNYEQKTLLEEEEKDWHKSAHKKDEANPDKEREWVDSVVLDPRIAARMQRYVLSPEDEARSQRIAEGAEYILGEERPTPVPFWQRMWIKYGYGEDEETLKRKPIIGNIDGEDDQ</sequence>
<reference key="1">
    <citation type="journal article" date="2005" name="Nature">
        <title>Genome sequencing and analysis of Aspergillus oryzae.</title>
        <authorList>
            <person name="Machida M."/>
            <person name="Asai K."/>
            <person name="Sano M."/>
            <person name="Tanaka T."/>
            <person name="Kumagai T."/>
            <person name="Terai G."/>
            <person name="Kusumoto K."/>
            <person name="Arima T."/>
            <person name="Akita O."/>
            <person name="Kashiwagi Y."/>
            <person name="Abe K."/>
            <person name="Gomi K."/>
            <person name="Horiuchi H."/>
            <person name="Kitamoto K."/>
            <person name="Kobayashi T."/>
            <person name="Takeuchi M."/>
            <person name="Denning D.W."/>
            <person name="Galagan J.E."/>
            <person name="Nierman W.C."/>
            <person name="Yu J."/>
            <person name="Archer D.B."/>
            <person name="Bennett J.W."/>
            <person name="Bhatnagar D."/>
            <person name="Cleveland T.E."/>
            <person name="Fedorova N.D."/>
            <person name="Gotoh O."/>
            <person name="Horikawa H."/>
            <person name="Hosoyama A."/>
            <person name="Ichinomiya M."/>
            <person name="Igarashi R."/>
            <person name="Iwashita K."/>
            <person name="Juvvadi P.R."/>
            <person name="Kato M."/>
            <person name="Kato Y."/>
            <person name="Kin T."/>
            <person name="Kokubun A."/>
            <person name="Maeda H."/>
            <person name="Maeyama N."/>
            <person name="Maruyama J."/>
            <person name="Nagasaki H."/>
            <person name="Nakajima T."/>
            <person name="Oda K."/>
            <person name="Okada K."/>
            <person name="Paulsen I."/>
            <person name="Sakamoto K."/>
            <person name="Sawano T."/>
            <person name="Takahashi M."/>
            <person name="Takase K."/>
            <person name="Terabayashi Y."/>
            <person name="Wortman J.R."/>
            <person name="Yamada O."/>
            <person name="Yamagata Y."/>
            <person name="Anazawa H."/>
            <person name="Hata Y."/>
            <person name="Koide Y."/>
            <person name="Komori T."/>
            <person name="Koyama Y."/>
            <person name="Minetoki T."/>
            <person name="Suharnan S."/>
            <person name="Tanaka A."/>
            <person name="Isono K."/>
            <person name="Kuhara S."/>
            <person name="Ogasawara N."/>
            <person name="Kikuchi H."/>
        </authorList>
    </citation>
    <scope>NUCLEOTIDE SEQUENCE [LARGE SCALE GENOMIC DNA]</scope>
    <source>
        <strain>ATCC 42149 / RIB 40</strain>
    </source>
</reference>
<comment type="function">
    <text evidence="1">Essential component of the TIM22 complex, a complex that mediates the import and insertion of multi-pass transmembrane proteins into the mitochondrial inner membrane. The TIM22 complex forms a twin-pore translocase that uses the membrane potential as external driving force (By similarity).</text>
</comment>
<comment type="subunit">
    <text evidence="1">Component of the TIM22 complex, whose core is composed of TIM22 and TIM54, associated with the 70 kDa heterohexamer composed of TIM9 and TIM10 (or TIM8 and TIM13).</text>
</comment>
<comment type="subcellular location">
    <subcellularLocation>
        <location evidence="1">Mitochondrion inner membrane</location>
        <topology evidence="1">Single-pass membrane protein</topology>
    </subcellularLocation>
</comment>
<comment type="similarity">
    <text evidence="4">Belongs to the TIM54 family.</text>
</comment>
<gene>
    <name type="primary">tim54</name>
    <name type="ORF">AO090003001024</name>
</gene>
<proteinExistence type="inferred from homology"/>
<accession>Q2UJY4</accession>
<organism>
    <name type="scientific">Aspergillus oryzae (strain ATCC 42149 / RIB 40)</name>
    <name type="common">Yellow koji mold</name>
    <dbReference type="NCBI Taxonomy" id="510516"/>
    <lineage>
        <taxon>Eukaryota</taxon>
        <taxon>Fungi</taxon>
        <taxon>Dikarya</taxon>
        <taxon>Ascomycota</taxon>
        <taxon>Pezizomycotina</taxon>
        <taxon>Eurotiomycetes</taxon>
        <taxon>Eurotiomycetidae</taxon>
        <taxon>Eurotiales</taxon>
        <taxon>Aspergillaceae</taxon>
        <taxon>Aspergillus</taxon>
        <taxon>Aspergillus subgen. Circumdati</taxon>
    </lineage>
</organism>
<name>TIM54_ASPOR</name>
<feature type="chain" id="PRO_0000228012" description="Mitochondrial import inner membrane translocase subunit tim54">
    <location>
        <begin position="1"/>
        <end position="445"/>
    </location>
</feature>
<feature type="topological domain" description="Mitochondrial matrix" evidence="2">
    <location>
        <begin position="1"/>
        <end position="11"/>
    </location>
</feature>
<feature type="transmembrane region" description="Helical" evidence="2">
    <location>
        <begin position="12"/>
        <end position="29"/>
    </location>
</feature>
<feature type="topological domain" description="Mitochondrial intermembrane" evidence="2">
    <location>
        <begin position="30"/>
        <end position="445"/>
    </location>
</feature>
<feature type="region of interest" description="Disordered" evidence="3">
    <location>
        <begin position="175"/>
        <end position="252"/>
    </location>
</feature>
<feature type="compositionally biased region" description="Polar residues" evidence="3">
    <location>
        <begin position="197"/>
        <end position="209"/>
    </location>
</feature>
<feature type="compositionally biased region" description="Basic and acidic residues" evidence="3">
    <location>
        <begin position="211"/>
        <end position="226"/>
    </location>
</feature>
<feature type="compositionally biased region" description="Low complexity" evidence="3">
    <location>
        <begin position="242"/>
        <end position="252"/>
    </location>
</feature>